<feature type="chain" id="PRO_0000047994" description="DNA-directed RNA polymerase subunit beta">
    <location>
        <begin position="1"/>
        <end position="1342"/>
    </location>
</feature>
<accession>Q8DD20</accession>
<name>RPOB_VIBVU</name>
<evidence type="ECO:0000255" key="1">
    <source>
        <dbReference type="HAMAP-Rule" id="MF_01321"/>
    </source>
</evidence>
<dbReference type="EC" id="2.7.7.6" evidence="1"/>
<dbReference type="EMBL" id="AE016795">
    <property type="protein sequence ID" value="AAO09671.1"/>
    <property type="molecule type" value="Genomic_DNA"/>
</dbReference>
<dbReference type="RefSeq" id="WP_011079201.1">
    <property type="nucleotide sequence ID" value="NC_004459.3"/>
</dbReference>
<dbReference type="SMR" id="Q8DD20"/>
<dbReference type="KEGG" id="vvu:VV1_1211"/>
<dbReference type="HOGENOM" id="CLU_000524_4_3_6"/>
<dbReference type="Proteomes" id="UP000002275">
    <property type="component" value="Chromosome 1"/>
</dbReference>
<dbReference type="GO" id="GO:0000428">
    <property type="term" value="C:DNA-directed RNA polymerase complex"/>
    <property type="evidence" value="ECO:0007669"/>
    <property type="project" value="UniProtKB-KW"/>
</dbReference>
<dbReference type="GO" id="GO:0003677">
    <property type="term" value="F:DNA binding"/>
    <property type="evidence" value="ECO:0007669"/>
    <property type="project" value="UniProtKB-UniRule"/>
</dbReference>
<dbReference type="GO" id="GO:0003899">
    <property type="term" value="F:DNA-directed RNA polymerase activity"/>
    <property type="evidence" value="ECO:0007669"/>
    <property type="project" value="UniProtKB-UniRule"/>
</dbReference>
<dbReference type="GO" id="GO:0032549">
    <property type="term" value="F:ribonucleoside binding"/>
    <property type="evidence" value="ECO:0007669"/>
    <property type="project" value="InterPro"/>
</dbReference>
<dbReference type="GO" id="GO:0006351">
    <property type="term" value="P:DNA-templated transcription"/>
    <property type="evidence" value="ECO:0007669"/>
    <property type="project" value="UniProtKB-UniRule"/>
</dbReference>
<dbReference type="CDD" id="cd00653">
    <property type="entry name" value="RNA_pol_B_RPB2"/>
    <property type="match status" value="1"/>
</dbReference>
<dbReference type="FunFam" id="2.30.150.10:FF:000001">
    <property type="entry name" value="DNA-directed RNA polymerase subunit beta"/>
    <property type="match status" value="1"/>
</dbReference>
<dbReference type="FunFam" id="2.40.270.10:FF:000003">
    <property type="entry name" value="DNA-directed RNA polymerase subunit beta"/>
    <property type="match status" value="1"/>
</dbReference>
<dbReference type="FunFam" id="2.40.270.10:FF:000004">
    <property type="entry name" value="DNA-directed RNA polymerase subunit beta"/>
    <property type="match status" value="1"/>
</dbReference>
<dbReference type="FunFam" id="2.40.50.100:FF:000006">
    <property type="entry name" value="DNA-directed RNA polymerase subunit beta"/>
    <property type="match status" value="1"/>
</dbReference>
<dbReference type="FunFam" id="2.40.50.150:FF:000001">
    <property type="entry name" value="DNA-directed RNA polymerase subunit beta"/>
    <property type="match status" value="1"/>
</dbReference>
<dbReference type="FunFam" id="3.90.1100.10:FF:000002">
    <property type="entry name" value="DNA-directed RNA polymerase subunit beta"/>
    <property type="match status" value="1"/>
</dbReference>
<dbReference type="FunFam" id="3.90.1110.10:FF:000001">
    <property type="entry name" value="DNA-directed RNA polymerase subunit beta"/>
    <property type="match status" value="1"/>
</dbReference>
<dbReference type="FunFam" id="3.90.1110.10:FF:000004">
    <property type="entry name" value="DNA-directed RNA polymerase subunit beta"/>
    <property type="match status" value="1"/>
</dbReference>
<dbReference type="FunFam" id="3.90.1800.10:FF:000001">
    <property type="entry name" value="DNA-directed RNA polymerase subunit beta"/>
    <property type="match status" value="1"/>
</dbReference>
<dbReference type="Gene3D" id="2.40.50.100">
    <property type="match status" value="1"/>
</dbReference>
<dbReference type="Gene3D" id="2.40.50.150">
    <property type="match status" value="1"/>
</dbReference>
<dbReference type="Gene3D" id="3.90.1100.10">
    <property type="match status" value="2"/>
</dbReference>
<dbReference type="Gene3D" id="6.10.140.1670">
    <property type="match status" value="1"/>
</dbReference>
<dbReference type="Gene3D" id="2.30.150.10">
    <property type="entry name" value="DNA-directed RNA polymerase, beta subunit, external 1 domain"/>
    <property type="match status" value="1"/>
</dbReference>
<dbReference type="Gene3D" id="2.40.270.10">
    <property type="entry name" value="DNA-directed RNA polymerase, subunit 2, domain 6"/>
    <property type="match status" value="1"/>
</dbReference>
<dbReference type="Gene3D" id="3.90.1800.10">
    <property type="entry name" value="RNA polymerase alpha subunit dimerisation domain"/>
    <property type="match status" value="1"/>
</dbReference>
<dbReference type="HAMAP" id="MF_01321">
    <property type="entry name" value="RNApol_bact_RpoB"/>
    <property type="match status" value="1"/>
</dbReference>
<dbReference type="InterPro" id="IPR042107">
    <property type="entry name" value="DNA-dir_RNA_pol_bsu_ext_1_sf"/>
</dbReference>
<dbReference type="InterPro" id="IPR019462">
    <property type="entry name" value="DNA-dir_RNA_pol_bsu_external_1"/>
</dbReference>
<dbReference type="InterPro" id="IPR015712">
    <property type="entry name" value="DNA-dir_RNA_pol_su2"/>
</dbReference>
<dbReference type="InterPro" id="IPR007120">
    <property type="entry name" value="DNA-dir_RNAP_su2_dom"/>
</dbReference>
<dbReference type="InterPro" id="IPR037033">
    <property type="entry name" value="DNA-dir_RNAP_su2_hyb_sf"/>
</dbReference>
<dbReference type="InterPro" id="IPR010243">
    <property type="entry name" value="RNA_pol_bsu_bac"/>
</dbReference>
<dbReference type="InterPro" id="IPR007121">
    <property type="entry name" value="RNA_pol_bsu_CS"/>
</dbReference>
<dbReference type="InterPro" id="IPR007644">
    <property type="entry name" value="RNA_pol_bsu_protrusion"/>
</dbReference>
<dbReference type="InterPro" id="IPR007642">
    <property type="entry name" value="RNA_pol_Rpb2_2"/>
</dbReference>
<dbReference type="InterPro" id="IPR007645">
    <property type="entry name" value="RNA_pol_Rpb2_3"/>
</dbReference>
<dbReference type="InterPro" id="IPR007641">
    <property type="entry name" value="RNA_pol_Rpb2_7"/>
</dbReference>
<dbReference type="InterPro" id="IPR014724">
    <property type="entry name" value="RNA_pol_RPB2_OB-fold"/>
</dbReference>
<dbReference type="NCBIfam" id="NF001616">
    <property type="entry name" value="PRK00405.1"/>
    <property type="match status" value="1"/>
</dbReference>
<dbReference type="NCBIfam" id="TIGR02013">
    <property type="entry name" value="rpoB"/>
    <property type="match status" value="1"/>
</dbReference>
<dbReference type="PANTHER" id="PTHR20856">
    <property type="entry name" value="DNA-DIRECTED RNA POLYMERASE I SUBUNIT 2"/>
    <property type="match status" value="1"/>
</dbReference>
<dbReference type="Pfam" id="PF04563">
    <property type="entry name" value="RNA_pol_Rpb2_1"/>
    <property type="match status" value="1"/>
</dbReference>
<dbReference type="Pfam" id="PF04561">
    <property type="entry name" value="RNA_pol_Rpb2_2"/>
    <property type="match status" value="2"/>
</dbReference>
<dbReference type="Pfam" id="PF04565">
    <property type="entry name" value="RNA_pol_Rpb2_3"/>
    <property type="match status" value="1"/>
</dbReference>
<dbReference type="Pfam" id="PF10385">
    <property type="entry name" value="RNA_pol_Rpb2_45"/>
    <property type="match status" value="1"/>
</dbReference>
<dbReference type="Pfam" id="PF00562">
    <property type="entry name" value="RNA_pol_Rpb2_6"/>
    <property type="match status" value="1"/>
</dbReference>
<dbReference type="Pfam" id="PF04560">
    <property type="entry name" value="RNA_pol_Rpb2_7"/>
    <property type="match status" value="1"/>
</dbReference>
<dbReference type="SUPFAM" id="SSF64484">
    <property type="entry name" value="beta and beta-prime subunits of DNA dependent RNA-polymerase"/>
    <property type="match status" value="1"/>
</dbReference>
<dbReference type="PROSITE" id="PS01166">
    <property type="entry name" value="RNA_POL_BETA"/>
    <property type="match status" value="1"/>
</dbReference>
<comment type="function">
    <text evidence="1">DNA-dependent RNA polymerase catalyzes the transcription of DNA into RNA using the four ribonucleoside triphosphates as substrates.</text>
</comment>
<comment type="catalytic activity">
    <reaction evidence="1">
        <text>RNA(n) + a ribonucleoside 5'-triphosphate = RNA(n+1) + diphosphate</text>
        <dbReference type="Rhea" id="RHEA:21248"/>
        <dbReference type="Rhea" id="RHEA-COMP:14527"/>
        <dbReference type="Rhea" id="RHEA-COMP:17342"/>
        <dbReference type="ChEBI" id="CHEBI:33019"/>
        <dbReference type="ChEBI" id="CHEBI:61557"/>
        <dbReference type="ChEBI" id="CHEBI:140395"/>
        <dbReference type="EC" id="2.7.7.6"/>
    </reaction>
</comment>
<comment type="subunit">
    <text evidence="1">The RNAP catalytic core consists of 2 alpha, 1 beta, 1 beta' and 1 omega subunit. When a sigma factor is associated with the core the holoenzyme is formed, which can initiate transcription.</text>
</comment>
<comment type="similarity">
    <text evidence="1">Belongs to the RNA polymerase beta chain family.</text>
</comment>
<sequence>MVYSYTEKKRIRKDFGTRPQVLDIPYLLSIQLDSFDKFIEQDPEGQYGLEAAFRSVFPIQSYNGNSELQYVSYRLGEPVFDVKECQIRGVTYSKPLRVKLRLVIFDKDAPAGTVKDIKEQEVYMGEIPLMTDNGTFVINGTERVIVSQLHRSPGVFFDSDKGKTHSSGKVLYNARIIPYRGSWLDFEFDPKDNLYVRIDRRRKLPSTIILRALGKSTEEILDTFFEKVNFEVKDQTLMMELVPDRLRGETATFDIEANGTVYVEKGRRVTARHIRQLEKEGVDQIEVPVEYIVGKVSSKDYINEATGEIIVAANQEISLEALAKLSQAGHKQLEVLFTNDLDHGPFMSETLRIDSSVDRISALVEIYRMMRPGEPPTKEAAEALFESLFFSEERYDLSTVGRMKFNSSIGRDDAEEQGTLDETDIIEVMKKLIAIRNGKGEVDDIDHLGNRRIRSVGEMAENQFRVGLVRVERAVKERLSLGDLDAVMPQDLINAKPISAAVKEFFGSSQLSQFMDQNNPLSEVTHKRRISALGPGGLTRERAGFEVRDVHVTHYGRLCPIETPEGPNIGLINSLSAFARCNEYGFLETPYRRVVDGVVTDEVDYLSAIEEGQFVIAQANAKLNEDGTFADELITARQKGESGLHPREHVDYMDVATNQVVSIAASLIPFLEHDDANRALMGANMQRQAVPTLKAEKPLVGTGIERNVAVDSGVTSVAKRGGIIQSVDASRIVVKVNEEELIPGEAGIDIYNLTKYTRSNQNTCINQRPCVMPGEPVLRGDVLADGPSTDLGELALGQNMRIAFMPWNGYNFEDSILVSERVVQEDRFTTIHIQELTCVARDTKLGSEEITADIPNVGESALSKLDESGIVYIGAEVKGGDILVGKVTPKGETQLTPEEKLLRAIFGEKASDVKDTSLRVPNSVSGTIIDVQVFTRDGVEKDKRALEIEQMQLKEAKKDLTEEFQILEGGLLNRVKAVLLSGGYSEAKLDTTDRKKWLELTLEDDALQTQLEQLAEQYDELKADFDKKFETKRRKITQGDDLAPGVLKIVKVYLAVKRRIQPGDKMAGRHGNKGVISKINPVEDMPYDEKGQPVDIVLNPLGVPSRMNIGQILEVHLGLAAKGIGDKINQMVKEQQELAKFREFLQKVYDLGETRQKVDIASLSDEEVRTLIGNLRGGLPIATPVFDGASEASIKELLKLGGLPESGQLTLFDGRTGDAFERPVTVGYMYMLKLNHLVDDKMHARSTGSYSLVTQQPLGGKAQFGGQRFGEMEVWALEAYGAAYTLQEMLTVKSDDVNGRTKMYKNIVDGNHAMEPGMPESFNVLLKEIRSLGINIELEDEQ</sequence>
<keyword id="KW-0240">DNA-directed RNA polymerase</keyword>
<keyword id="KW-0548">Nucleotidyltransferase</keyword>
<keyword id="KW-0804">Transcription</keyword>
<keyword id="KW-0808">Transferase</keyword>
<protein>
    <recommendedName>
        <fullName evidence="1">DNA-directed RNA polymerase subunit beta</fullName>
        <shortName evidence="1">RNAP subunit beta</shortName>
        <ecNumber evidence="1">2.7.7.6</ecNumber>
    </recommendedName>
    <alternativeName>
        <fullName evidence="1">RNA polymerase subunit beta</fullName>
    </alternativeName>
    <alternativeName>
        <fullName evidence="1">Transcriptase subunit beta</fullName>
    </alternativeName>
</protein>
<proteinExistence type="inferred from homology"/>
<reference key="1">
    <citation type="submission" date="2002-12" db="EMBL/GenBank/DDBJ databases">
        <title>Complete genome sequence of Vibrio vulnificus CMCP6.</title>
        <authorList>
            <person name="Rhee J.H."/>
            <person name="Kim S.Y."/>
            <person name="Chung S.S."/>
            <person name="Kim J.J."/>
            <person name="Moon Y.H."/>
            <person name="Jeong H."/>
            <person name="Choy H.E."/>
        </authorList>
    </citation>
    <scope>NUCLEOTIDE SEQUENCE [LARGE SCALE GENOMIC DNA]</scope>
    <source>
        <strain>CMCP6</strain>
    </source>
</reference>
<gene>
    <name evidence="1" type="primary">rpoB</name>
    <name type="ordered locus">VV1_1211</name>
</gene>
<organism>
    <name type="scientific">Vibrio vulnificus (strain CMCP6)</name>
    <dbReference type="NCBI Taxonomy" id="216895"/>
    <lineage>
        <taxon>Bacteria</taxon>
        <taxon>Pseudomonadati</taxon>
        <taxon>Pseudomonadota</taxon>
        <taxon>Gammaproteobacteria</taxon>
        <taxon>Vibrionales</taxon>
        <taxon>Vibrionaceae</taxon>
        <taxon>Vibrio</taxon>
    </lineage>
</organism>